<gene>
    <name evidence="1" type="primary">lipB</name>
    <name type="ordered locus">FTT_1031</name>
</gene>
<dbReference type="EC" id="2.3.1.181" evidence="1"/>
<dbReference type="EMBL" id="AJ749949">
    <property type="protein sequence ID" value="CAG45664.1"/>
    <property type="molecule type" value="Genomic_DNA"/>
</dbReference>
<dbReference type="RefSeq" id="WP_003021140.1">
    <property type="nucleotide sequence ID" value="NC_006570.2"/>
</dbReference>
<dbReference type="RefSeq" id="YP_170016.1">
    <property type="nucleotide sequence ID" value="NC_006570.2"/>
</dbReference>
<dbReference type="SMR" id="Q5NG26"/>
<dbReference type="STRING" id="177416.FTT_1031"/>
<dbReference type="DNASU" id="3190841"/>
<dbReference type="EnsemblBacteria" id="CAG45664">
    <property type="protein sequence ID" value="CAG45664"/>
    <property type="gene ID" value="FTT_1031"/>
</dbReference>
<dbReference type="KEGG" id="ftu:FTT_1031"/>
<dbReference type="eggNOG" id="COG0321">
    <property type="taxonomic scope" value="Bacteria"/>
</dbReference>
<dbReference type="OrthoDB" id="9787061at2"/>
<dbReference type="UniPathway" id="UPA00538">
    <property type="reaction ID" value="UER00592"/>
</dbReference>
<dbReference type="Proteomes" id="UP000001174">
    <property type="component" value="Chromosome"/>
</dbReference>
<dbReference type="GO" id="GO:0005737">
    <property type="term" value="C:cytoplasm"/>
    <property type="evidence" value="ECO:0007669"/>
    <property type="project" value="UniProtKB-SubCell"/>
</dbReference>
<dbReference type="GO" id="GO:0033819">
    <property type="term" value="F:lipoyl(octanoyl) transferase activity"/>
    <property type="evidence" value="ECO:0007669"/>
    <property type="project" value="UniProtKB-EC"/>
</dbReference>
<dbReference type="GO" id="GO:0036211">
    <property type="term" value="P:protein modification process"/>
    <property type="evidence" value="ECO:0007669"/>
    <property type="project" value="InterPro"/>
</dbReference>
<dbReference type="CDD" id="cd16444">
    <property type="entry name" value="LipB"/>
    <property type="match status" value="1"/>
</dbReference>
<dbReference type="FunFam" id="3.30.930.10:FF:000020">
    <property type="entry name" value="Octanoyltransferase"/>
    <property type="match status" value="1"/>
</dbReference>
<dbReference type="Gene3D" id="3.30.930.10">
    <property type="entry name" value="Bira Bifunctional Protein, Domain 2"/>
    <property type="match status" value="1"/>
</dbReference>
<dbReference type="HAMAP" id="MF_00013">
    <property type="entry name" value="LipB"/>
    <property type="match status" value="1"/>
</dbReference>
<dbReference type="InterPro" id="IPR045864">
    <property type="entry name" value="aa-tRNA-synth_II/BPL/LPL"/>
</dbReference>
<dbReference type="InterPro" id="IPR004143">
    <property type="entry name" value="BPL_LPL_catalytic"/>
</dbReference>
<dbReference type="InterPro" id="IPR000544">
    <property type="entry name" value="Octanoyltransferase"/>
</dbReference>
<dbReference type="InterPro" id="IPR020605">
    <property type="entry name" value="Octanoyltransferase_CS"/>
</dbReference>
<dbReference type="NCBIfam" id="TIGR00214">
    <property type="entry name" value="lipB"/>
    <property type="match status" value="1"/>
</dbReference>
<dbReference type="NCBIfam" id="NF010922">
    <property type="entry name" value="PRK14342.1"/>
    <property type="match status" value="1"/>
</dbReference>
<dbReference type="PANTHER" id="PTHR10993:SF7">
    <property type="entry name" value="LIPOYLTRANSFERASE 2, MITOCHONDRIAL-RELATED"/>
    <property type="match status" value="1"/>
</dbReference>
<dbReference type="PANTHER" id="PTHR10993">
    <property type="entry name" value="OCTANOYLTRANSFERASE"/>
    <property type="match status" value="1"/>
</dbReference>
<dbReference type="Pfam" id="PF21948">
    <property type="entry name" value="LplA-B_cat"/>
    <property type="match status" value="1"/>
</dbReference>
<dbReference type="PIRSF" id="PIRSF016262">
    <property type="entry name" value="LPLase"/>
    <property type="match status" value="1"/>
</dbReference>
<dbReference type="SUPFAM" id="SSF55681">
    <property type="entry name" value="Class II aaRS and biotin synthetases"/>
    <property type="match status" value="1"/>
</dbReference>
<dbReference type="PROSITE" id="PS51733">
    <property type="entry name" value="BPL_LPL_CATALYTIC"/>
    <property type="match status" value="1"/>
</dbReference>
<dbReference type="PROSITE" id="PS01313">
    <property type="entry name" value="LIPB"/>
    <property type="match status" value="1"/>
</dbReference>
<sequence length="206" mass="23326">MNNIYQKDLGLQQYTKVFDDMLEFTSTRTPETNDEIWLVEHPAVFTQGKHGKPEHILNSHNIPIVATDRGGQVTYHGPGQAVIYFLLDIKRNKLGAKKLVTTVEQACINMLDKYYNLKAHIIDGAHGIYINNQKIASLGLRIKQGKSYHGIAINTNMDLTPFSYINPCGYSGLKMCQLANFYQEADIKKVQQQYTAEFVTLLNNSI</sequence>
<keyword id="KW-0012">Acyltransferase</keyword>
<keyword id="KW-0963">Cytoplasm</keyword>
<keyword id="KW-1185">Reference proteome</keyword>
<keyword id="KW-0808">Transferase</keyword>
<organism>
    <name type="scientific">Francisella tularensis subsp. tularensis (strain SCHU S4 / Schu 4)</name>
    <dbReference type="NCBI Taxonomy" id="177416"/>
    <lineage>
        <taxon>Bacteria</taxon>
        <taxon>Pseudomonadati</taxon>
        <taxon>Pseudomonadota</taxon>
        <taxon>Gammaproteobacteria</taxon>
        <taxon>Thiotrichales</taxon>
        <taxon>Francisellaceae</taxon>
        <taxon>Francisella</taxon>
    </lineage>
</organism>
<name>LIPB_FRATT</name>
<evidence type="ECO:0000255" key="1">
    <source>
        <dbReference type="HAMAP-Rule" id="MF_00013"/>
    </source>
</evidence>
<evidence type="ECO:0000255" key="2">
    <source>
        <dbReference type="PROSITE-ProRule" id="PRU01067"/>
    </source>
</evidence>
<reference key="1">
    <citation type="journal article" date="2005" name="Nat. Genet.">
        <title>The complete genome sequence of Francisella tularensis, the causative agent of tularemia.</title>
        <authorList>
            <person name="Larsson P."/>
            <person name="Oyston P.C.F."/>
            <person name="Chain P."/>
            <person name="Chu M.C."/>
            <person name="Duffield M."/>
            <person name="Fuxelius H.-H."/>
            <person name="Garcia E."/>
            <person name="Haelltorp G."/>
            <person name="Johansson D."/>
            <person name="Isherwood K.E."/>
            <person name="Karp P.D."/>
            <person name="Larsson E."/>
            <person name="Liu Y."/>
            <person name="Michell S."/>
            <person name="Prior J."/>
            <person name="Prior R."/>
            <person name="Malfatti S."/>
            <person name="Sjoestedt A."/>
            <person name="Svensson K."/>
            <person name="Thompson N."/>
            <person name="Vergez L."/>
            <person name="Wagg J.K."/>
            <person name="Wren B.W."/>
            <person name="Lindler L.E."/>
            <person name="Andersson S.G.E."/>
            <person name="Forsman M."/>
            <person name="Titball R.W."/>
        </authorList>
    </citation>
    <scope>NUCLEOTIDE SEQUENCE [LARGE SCALE GENOMIC DNA]</scope>
    <source>
        <strain>SCHU S4 / Schu 4</strain>
    </source>
</reference>
<feature type="chain" id="PRO_0000242723" description="Octanoyltransferase">
    <location>
        <begin position="1"/>
        <end position="206"/>
    </location>
</feature>
<feature type="domain" description="BPL/LPL catalytic" evidence="2">
    <location>
        <begin position="30"/>
        <end position="206"/>
    </location>
</feature>
<feature type="active site" description="Acyl-thioester intermediate" evidence="1">
    <location>
        <position position="168"/>
    </location>
</feature>
<feature type="binding site" evidence="1">
    <location>
        <begin position="69"/>
        <end position="76"/>
    </location>
    <ligand>
        <name>substrate</name>
    </ligand>
</feature>
<feature type="binding site" evidence="1">
    <location>
        <begin position="137"/>
        <end position="139"/>
    </location>
    <ligand>
        <name>substrate</name>
    </ligand>
</feature>
<feature type="binding site" evidence="1">
    <location>
        <begin position="150"/>
        <end position="152"/>
    </location>
    <ligand>
        <name>substrate</name>
    </ligand>
</feature>
<feature type="site" description="Lowers pKa of active site Cys" evidence="1">
    <location>
        <position position="134"/>
    </location>
</feature>
<proteinExistence type="inferred from homology"/>
<comment type="function">
    <text evidence="1">Catalyzes the transfer of endogenously produced octanoic acid from octanoyl-acyl-carrier-protein onto the lipoyl domains of lipoate-dependent enzymes. Lipoyl-ACP can also act as a substrate although octanoyl-ACP is likely to be the physiological substrate.</text>
</comment>
<comment type="catalytic activity">
    <reaction evidence="1">
        <text>octanoyl-[ACP] + L-lysyl-[protein] = N(6)-octanoyl-L-lysyl-[protein] + holo-[ACP] + H(+)</text>
        <dbReference type="Rhea" id="RHEA:17665"/>
        <dbReference type="Rhea" id="RHEA-COMP:9636"/>
        <dbReference type="Rhea" id="RHEA-COMP:9685"/>
        <dbReference type="Rhea" id="RHEA-COMP:9752"/>
        <dbReference type="Rhea" id="RHEA-COMP:9928"/>
        <dbReference type="ChEBI" id="CHEBI:15378"/>
        <dbReference type="ChEBI" id="CHEBI:29969"/>
        <dbReference type="ChEBI" id="CHEBI:64479"/>
        <dbReference type="ChEBI" id="CHEBI:78463"/>
        <dbReference type="ChEBI" id="CHEBI:78809"/>
        <dbReference type="EC" id="2.3.1.181"/>
    </reaction>
</comment>
<comment type="pathway">
    <text evidence="1">Protein modification; protein lipoylation via endogenous pathway; protein N(6)-(lipoyl)lysine from octanoyl-[acyl-carrier-protein]: step 1/2.</text>
</comment>
<comment type="subcellular location">
    <subcellularLocation>
        <location evidence="1">Cytoplasm</location>
    </subcellularLocation>
</comment>
<comment type="miscellaneous">
    <text evidence="1">In the reaction, the free carboxyl group of octanoic acid is attached via an amide linkage to the epsilon-amino group of a specific lysine residue of lipoyl domains of lipoate-dependent enzymes.</text>
</comment>
<comment type="similarity">
    <text evidence="1">Belongs to the LipB family.</text>
</comment>
<accession>Q5NG26</accession>
<protein>
    <recommendedName>
        <fullName evidence="1">Octanoyltransferase</fullName>
        <ecNumber evidence="1">2.3.1.181</ecNumber>
    </recommendedName>
    <alternativeName>
        <fullName evidence="1">Lipoate-protein ligase B</fullName>
    </alternativeName>
    <alternativeName>
        <fullName evidence="1">Lipoyl/octanoyl transferase</fullName>
    </alternativeName>
    <alternativeName>
        <fullName evidence="1">Octanoyl-[acyl-carrier-protein]-protein N-octanoyltransferase</fullName>
    </alternativeName>
</protein>